<evidence type="ECO:0000269" key="1">
    <source>
    </source>
</evidence>
<evidence type="ECO:0000269" key="2">
    <source>
    </source>
</evidence>
<evidence type="ECO:0000269" key="3">
    <source>
    </source>
</evidence>
<evidence type="ECO:0000269" key="4">
    <source>
    </source>
</evidence>
<evidence type="ECO:0000303" key="5">
    <source>
    </source>
</evidence>
<feature type="chain" id="PRO_0000247212" description="Citrinin resistance protein, mitochondrial">
    <location>
        <begin position="1"/>
        <end position="101"/>
    </location>
</feature>
<keyword id="KW-0496">Mitochondrion</keyword>
<keyword id="KW-1185">Reference proteome</keyword>
<name>CIS1_YEAST</name>
<comment type="function">
    <text evidence="4">Mitochondrial protein that is involved in citrinin resistance.</text>
</comment>
<comment type="subcellular location">
    <subcellularLocation>
        <location evidence="3">Mitochondrion</location>
    </subcellularLocation>
</comment>
<comment type="induction">
    <text evidence="1 2 4">Expression is induced in the presence of citrinin (PubMed:26713447). Expression is induced by the PDR1 and YRR1 multidrug resistance transcription factors (PubMed:11470516, PubMed:11909958).</text>
</comment>
<accession>Q06139</accession>
<accession>D6VYY5</accession>
<reference key="1">
    <citation type="journal article" date="1997" name="Nature">
        <title>The nucleotide sequence of Saccharomyces cerevisiae chromosome XII.</title>
        <authorList>
            <person name="Johnston M."/>
            <person name="Hillier L.W."/>
            <person name="Riles L."/>
            <person name="Albermann K."/>
            <person name="Andre B."/>
            <person name="Ansorge W."/>
            <person name="Benes V."/>
            <person name="Brueckner M."/>
            <person name="Delius H."/>
            <person name="Dubois E."/>
            <person name="Duesterhoeft A."/>
            <person name="Entian K.-D."/>
            <person name="Floeth M."/>
            <person name="Goffeau A."/>
            <person name="Hebling U."/>
            <person name="Heumann K."/>
            <person name="Heuss-Neitzel D."/>
            <person name="Hilbert H."/>
            <person name="Hilger F."/>
            <person name="Kleine K."/>
            <person name="Koetter P."/>
            <person name="Louis E.J."/>
            <person name="Messenguy F."/>
            <person name="Mewes H.-W."/>
            <person name="Miosga T."/>
            <person name="Moestl D."/>
            <person name="Mueller-Auer S."/>
            <person name="Nentwich U."/>
            <person name="Obermaier B."/>
            <person name="Piravandi E."/>
            <person name="Pohl T.M."/>
            <person name="Portetelle D."/>
            <person name="Purnelle B."/>
            <person name="Rechmann S."/>
            <person name="Rieger M."/>
            <person name="Rinke M."/>
            <person name="Rose M."/>
            <person name="Scharfe M."/>
            <person name="Scherens B."/>
            <person name="Scholler P."/>
            <person name="Schwager C."/>
            <person name="Schwarz S."/>
            <person name="Underwood A.P."/>
            <person name="Urrestarazu L.A."/>
            <person name="Vandenbol M."/>
            <person name="Verhasselt P."/>
            <person name="Vierendeels F."/>
            <person name="Voet M."/>
            <person name="Volckaert G."/>
            <person name="Voss H."/>
            <person name="Wambutt R."/>
            <person name="Wedler E."/>
            <person name="Wedler H."/>
            <person name="Zimmermann F.K."/>
            <person name="Zollner A."/>
            <person name="Hani J."/>
            <person name="Hoheisel J.D."/>
        </authorList>
    </citation>
    <scope>NUCLEOTIDE SEQUENCE [LARGE SCALE GENOMIC DNA]</scope>
    <source>
        <strain>ATCC 204508 / S288c</strain>
    </source>
</reference>
<reference key="2">
    <citation type="journal article" date="2014" name="G3 (Bethesda)">
        <title>The reference genome sequence of Saccharomyces cerevisiae: Then and now.</title>
        <authorList>
            <person name="Engel S.R."/>
            <person name="Dietrich F.S."/>
            <person name="Fisk D.G."/>
            <person name="Binkley G."/>
            <person name="Balakrishnan R."/>
            <person name="Costanzo M.C."/>
            <person name="Dwight S.S."/>
            <person name="Hitz B.C."/>
            <person name="Karra K."/>
            <person name="Nash R.S."/>
            <person name="Weng S."/>
            <person name="Wong E.D."/>
            <person name="Lloyd P."/>
            <person name="Skrzypek M.S."/>
            <person name="Miyasato S.R."/>
            <person name="Simison M."/>
            <person name="Cherry J.M."/>
        </authorList>
    </citation>
    <scope>GENOME REANNOTATION</scope>
    <source>
        <strain>ATCC 204508 / S288c</strain>
    </source>
</reference>
<reference key="3">
    <citation type="journal article" date="2007" name="Genome Res.">
        <title>Approaching a complete repository of sequence-verified protein-encoding clones for Saccharomyces cerevisiae.</title>
        <authorList>
            <person name="Hu Y."/>
            <person name="Rolfs A."/>
            <person name="Bhullar B."/>
            <person name="Murthy T.V.S."/>
            <person name="Zhu C."/>
            <person name="Berger M.F."/>
            <person name="Camargo A.A."/>
            <person name="Kelley F."/>
            <person name="McCarron S."/>
            <person name="Jepson D."/>
            <person name="Richardson A."/>
            <person name="Raphael J."/>
            <person name="Moreira D."/>
            <person name="Taycher E."/>
            <person name="Zuo D."/>
            <person name="Mohr S."/>
            <person name="Kane M.F."/>
            <person name="Williamson J."/>
            <person name="Simpson A.J.G."/>
            <person name="Bulyk M.L."/>
            <person name="Harlow E."/>
            <person name="Marsischky G."/>
            <person name="Kolodner R.D."/>
            <person name="LaBaer J."/>
        </authorList>
    </citation>
    <scope>NUCLEOTIDE SEQUENCE [GENOMIC DNA]</scope>
    <source>
        <strain>ATCC 204508 / S288c</strain>
    </source>
</reference>
<reference key="4">
    <citation type="journal article" date="2001" name="Gene">
        <title>Novel target genes of the yeast regulator Pdr1p: a contribution of the TPO1 gene in resistance to quinidine and other drugs.</title>
        <authorList>
            <person name="do Valle Matta M.A."/>
            <person name="Jonniaux J.-L."/>
            <person name="Balzi E."/>
            <person name="Goffeau A."/>
            <person name="van den Hazel B."/>
        </authorList>
    </citation>
    <scope>INDUCTION</scope>
</reference>
<reference key="5">
    <citation type="journal article" date="2002" name="Mol. Cell. Biol.">
        <title>New insights into the pleiotropic drug resistance network from genome-wide characterization of the YRR1 transcription factor regulation system.</title>
        <authorList>
            <person name="Le Crom S."/>
            <person name="Devaux F."/>
            <person name="Marc P."/>
            <person name="Zhang X."/>
            <person name="Moye-Rowley W.S."/>
            <person name="Jacq C."/>
        </authorList>
    </citation>
    <scope>INDUCTION</scope>
</reference>
<reference key="6">
    <citation type="journal article" date="2003" name="Nature">
        <title>Global analysis of protein localization in budding yeast.</title>
        <authorList>
            <person name="Huh W.-K."/>
            <person name="Falvo J.V."/>
            <person name="Gerke L.C."/>
            <person name="Carroll A.S."/>
            <person name="Howson R.W."/>
            <person name="Weissman J.S."/>
            <person name="O'Shea E.K."/>
        </authorList>
    </citation>
    <scope>SUBCELLULAR LOCATION [LARGE SCALE ANALYSIS]</scope>
</reference>
<reference key="7">
    <citation type="journal article" date="2015" name="PLoS Genet.">
        <title>Dissecting the Genetic Basis of a Complex cis-Regulatory Adaptation.</title>
        <authorList>
            <person name="Naranjo S."/>
            <person name="Smith J.D."/>
            <person name="Artieri C.G."/>
            <person name="Zhang M."/>
            <person name="Zhou Y."/>
            <person name="Palmer M.E."/>
            <person name="Fraser H.B."/>
        </authorList>
    </citation>
    <scope>FUNCTION</scope>
    <scope>INDUCTION</scope>
</reference>
<sequence>MQSISNCPIGLVSKNTINSASTIAEWVACPWKYINVVGSGRYVSNKPDKITRYDLLKAAQEAEMQELLTRNDMKGRHKRNKKSKIALETIAEENSSTESLF</sequence>
<gene>
    <name evidence="5" type="primary">CIS1</name>
    <name type="ordered locus">YLR346C</name>
</gene>
<proteinExistence type="evidence at protein level"/>
<protein>
    <recommendedName>
        <fullName evidence="5">Citrinin resistance protein, mitochondrial</fullName>
    </recommendedName>
    <alternativeName>
        <fullName evidence="5">Citrinin sensitive knockout protein 1</fullName>
    </alternativeName>
</protein>
<dbReference type="EMBL" id="U19028">
    <property type="protein sequence ID" value="AAB67264.1"/>
    <property type="molecule type" value="Genomic_DNA"/>
</dbReference>
<dbReference type="EMBL" id="AY692581">
    <property type="protein sequence ID" value="AAT92600.1"/>
    <property type="molecule type" value="Genomic_DNA"/>
</dbReference>
<dbReference type="EMBL" id="BK006945">
    <property type="protein sequence ID" value="DAA09651.1"/>
    <property type="molecule type" value="Genomic_DNA"/>
</dbReference>
<dbReference type="PIR" id="S51349">
    <property type="entry name" value="S51349"/>
</dbReference>
<dbReference type="RefSeq" id="NP_013450.1">
    <property type="nucleotide sequence ID" value="NM_001182235.1"/>
</dbReference>
<dbReference type="BioGRID" id="31609">
    <property type="interactions" value="119"/>
</dbReference>
<dbReference type="DIP" id="DIP-5578N"/>
<dbReference type="FunCoup" id="Q06139">
    <property type="interactions" value="55"/>
</dbReference>
<dbReference type="IntAct" id="Q06139">
    <property type="interactions" value="2"/>
</dbReference>
<dbReference type="STRING" id="4932.YLR346C"/>
<dbReference type="iPTMnet" id="Q06139"/>
<dbReference type="PaxDb" id="4932-YLR346C"/>
<dbReference type="PeptideAtlas" id="Q06139"/>
<dbReference type="EnsemblFungi" id="YLR346C_mRNA">
    <property type="protein sequence ID" value="YLR346C"/>
    <property type="gene ID" value="YLR346C"/>
</dbReference>
<dbReference type="GeneID" id="851060"/>
<dbReference type="KEGG" id="sce:YLR346C"/>
<dbReference type="AGR" id="SGD:S000004338"/>
<dbReference type="SGD" id="S000004338">
    <property type="gene designation" value="CIS1"/>
</dbReference>
<dbReference type="VEuPathDB" id="FungiDB:YLR346C"/>
<dbReference type="HOGENOM" id="CLU_2307651_0_0_1"/>
<dbReference type="InParanoid" id="Q06139"/>
<dbReference type="OMA" id="MQSISNC"/>
<dbReference type="OrthoDB" id="4069406at2759"/>
<dbReference type="BioCyc" id="YEAST:G3O-32422-MONOMER"/>
<dbReference type="BioGRID-ORCS" id="851060">
    <property type="hits" value="2 hits in 10 CRISPR screens"/>
</dbReference>
<dbReference type="PRO" id="PR:Q06139"/>
<dbReference type="Proteomes" id="UP000002311">
    <property type="component" value="Chromosome XII"/>
</dbReference>
<dbReference type="RNAct" id="Q06139">
    <property type="molecule type" value="protein"/>
</dbReference>
<dbReference type="GO" id="GO:0005739">
    <property type="term" value="C:mitochondrion"/>
    <property type="evidence" value="ECO:0007005"/>
    <property type="project" value="SGD"/>
</dbReference>
<organism>
    <name type="scientific">Saccharomyces cerevisiae (strain ATCC 204508 / S288c)</name>
    <name type="common">Baker's yeast</name>
    <dbReference type="NCBI Taxonomy" id="559292"/>
    <lineage>
        <taxon>Eukaryota</taxon>
        <taxon>Fungi</taxon>
        <taxon>Dikarya</taxon>
        <taxon>Ascomycota</taxon>
        <taxon>Saccharomycotina</taxon>
        <taxon>Saccharomycetes</taxon>
        <taxon>Saccharomycetales</taxon>
        <taxon>Saccharomycetaceae</taxon>
        <taxon>Saccharomyces</taxon>
    </lineage>
</organism>